<proteinExistence type="inferred from homology"/>
<dbReference type="EC" id="3.6.4.-" evidence="2"/>
<dbReference type="EMBL" id="ADOT01000060">
    <property type="protein sequence ID" value="EGX51963.1"/>
    <property type="molecule type" value="Genomic_DNA"/>
</dbReference>
<dbReference type="RefSeq" id="XP_011119485.1">
    <property type="nucleotide sequence ID" value="XM_011121183.1"/>
</dbReference>
<dbReference type="SMR" id="G1X4S3"/>
<dbReference type="FunCoup" id="G1X4S3">
    <property type="interactions" value="267"/>
</dbReference>
<dbReference type="STRING" id="756982.G1X4S3"/>
<dbReference type="GeneID" id="22890437"/>
<dbReference type="eggNOG" id="KOG0736">
    <property type="taxonomic scope" value="Eukaryota"/>
</dbReference>
<dbReference type="HOGENOM" id="CLU_000688_0_2_1"/>
<dbReference type="InParanoid" id="G1X4S3"/>
<dbReference type="OMA" id="KIMLCEP"/>
<dbReference type="OrthoDB" id="793337at4890"/>
<dbReference type="Proteomes" id="UP000008784">
    <property type="component" value="Unassembled WGS sequence"/>
</dbReference>
<dbReference type="GO" id="GO:0005829">
    <property type="term" value="C:cytosol"/>
    <property type="evidence" value="ECO:0007669"/>
    <property type="project" value="UniProtKB-SubCell"/>
</dbReference>
<dbReference type="GO" id="GO:0005778">
    <property type="term" value="C:peroxisomal membrane"/>
    <property type="evidence" value="ECO:0007669"/>
    <property type="project" value="UniProtKB-SubCell"/>
</dbReference>
<dbReference type="GO" id="GO:0005524">
    <property type="term" value="F:ATP binding"/>
    <property type="evidence" value="ECO:0007669"/>
    <property type="project" value="UniProtKB-KW"/>
</dbReference>
<dbReference type="GO" id="GO:0016887">
    <property type="term" value="F:ATP hydrolysis activity"/>
    <property type="evidence" value="ECO:0007669"/>
    <property type="project" value="InterPro"/>
</dbReference>
<dbReference type="GO" id="GO:0016558">
    <property type="term" value="P:protein import into peroxisome matrix"/>
    <property type="evidence" value="ECO:0007669"/>
    <property type="project" value="TreeGrafter"/>
</dbReference>
<dbReference type="CDD" id="cd19527">
    <property type="entry name" value="RecA-like_PEX6_r2"/>
    <property type="match status" value="1"/>
</dbReference>
<dbReference type="FunFam" id="3.40.50.300:FF:000109">
    <property type="entry name" value="Peroxisomal biogenesis factor 6"/>
    <property type="match status" value="1"/>
</dbReference>
<dbReference type="FunFam" id="1.10.8.60:FF:000039">
    <property type="entry name" value="peroxisome biogenesis factor 6"/>
    <property type="match status" value="1"/>
</dbReference>
<dbReference type="Gene3D" id="1.10.8.60">
    <property type="match status" value="2"/>
</dbReference>
<dbReference type="Gene3D" id="3.40.50.300">
    <property type="entry name" value="P-loop containing nucleotide triphosphate hydrolases"/>
    <property type="match status" value="2"/>
</dbReference>
<dbReference type="InterPro" id="IPR003593">
    <property type="entry name" value="AAA+_ATPase"/>
</dbReference>
<dbReference type="InterPro" id="IPR050168">
    <property type="entry name" value="AAA_ATPase_domain"/>
</dbReference>
<dbReference type="InterPro" id="IPR003959">
    <property type="entry name" value="ATPase_AAA_core"/>
</dbReference>
<dbReference type="InterPro" id="IPR003960">
    <property type="entry name" value="ATPase_AAA_CS"/>
</dbReference>
<dbReference type="InterPro" id="IPR027417">
    <property type="entry name" value="P-loop_NTPase"/>
</dbReference>
<dbReference type="InterPro" id="IPR056995">
    <property type="entry name" value="PEX6_4th_dom"/>
</dbReference>
<dbReference type="InterPro" id="IPR047533">
    <property type="entry name" value="RecA-like_PEX6_r2"/>
</dbReference>
<dbReference type="PANTHER" id="PTHR23077">
    <property type="entry name" value="AAA-FAMILY ATPASE"/>
    <property type="match status" value="1"/>
</dbReference>
<dbReference type="PANTHER" id="PTHR23077:SF9">
    <property type="entry name" value="PEROXISOMAL ATPASE PEX6"/>
    <property type="match status" value="1"/>
</dbReference>
<dbReference type="Pfam" id="PF00004">
    <property type="entry name" value="AAA"/>
    <property type="match status" value="2"/>
</dbReference>
<dbReference type="Pfam" id="PF23315">
    <property type="entry name" value="PEX6_4th"/>
    <property type="match status" value="1"/>
</dbReference>
<dbReference type="SMART" id="SM00382">
    <property type="entry name" value="AAA"/>
    <property type="match status" value="1"/>
</dbReference>
<dbReference type="SUPFAM" id="SSF52540">
    <property type="entry name" value="P-loop containing nucleoside triphosphate hydrolases"/>
    <property type="match status" value="2"/>
</dbReference>
<dbReference type="PROSITE" id="PS00674">
    <property type="entry name" value="AAA"/>
    <property type="match status" value="1"/>
</dbReference>
<feature type="chain" id="PRO_0000456238" description="Peroxisomal ATPase PEX6">
    <location>
        <begin position="1"/>
        <end position="1183"/>
    </location>
</feature>
<feature type="region of interest" description="Disordered" evidence="4">
    <location>
        <begin position="161"/>
        <end position="205"/>
    </location>
</feature>
<feature type="region of interest" description="AAA-cassette D1" evidence="2">
    <location>
        <begin position="576"/>
        <end position="785"/>
    </location>
</feature>
<feature type="region of interest" description="AAA-cassette D2" evidence="2">
    <location>
        <begin position="878"/>
        <end position="1070"/>
    </location>
</feature>
<feature type="region of interest" description="Disordered" evidence="4">
    <location>
        <begin position="1160"/>
        <end position="1183"/>
    </location>
</feature>
<feature type="compositionally biased region" description="Acidic residues" evidence="4">
    <location>
        <begin position="183"/>
        <end position="204"/>
    </location>
</feature>
<feature type="compositionally biased region" description="Acidic residues" evidence="4">
    <location>
        <begin position="1173"/>
        <end position="1183"/>
    </location>
</feature>
<feature type="binding site" evidence="3">
    <location>
        <begin position="883"/>
        <end position="890"/>
    </location>
    <ligand>
        <name>ATP</name>
        <dbReference type="ChEBI" id="CHEBI:30616"/>
    </ligand>
</feature>
<organism>
    <name type="scientific">Arthrobotrys oligospora (strain ATCC 24927 / CBS 115.81 / DSM 1491)</name>
    <name type="common">Nematode-trapping fungus</name>
    <name type="synonym">Didymozoophaga oligospora</name>
    <dbReference type="NCBI Taxonomy" id="756982"/>
    <lineage>
        <taxon>Eukaryota</taxon>
        <taxon>Fungi</taxon>
        <taxon>Dikarya</taxon>
        <taxon>Ascomycota</taxon>
        <taxon>Pezizomycotina</taxon>
        <taxon>Orbiliomycetes</taxon>
        <taxon>Orbiliales</taxon>
        <taxon>Orbiliaceae</taxon>
        <taxon>Orbilia</taxon>
        <taxon>Orbilia oligospora</taxon>
    </lineage>
</organism>
<accession>G1X4S3</accession>
<name>PEX6_ARTOA</name>
<comment type="function">
    <text evidence="2 5">Component of the PEX1-PEX6 AAA ATPase complex, a protein dislocase complex that mediates the ATP-dependent extraction of the PEX5 receptor from peroxisomal membranes, an essential step for PEX5 recycling. Specifically recognizes PEX5 monoubiquitinated at 'Cys-6', and pulls it out of the peroxisome lumen through the PEX2-PEX10-PEX12 retrotranslocation channel. Extraction by the PEX1-PEX6 AAA ATPase complex is accompanied by unfolding of the TPR repeats and release of bound cargo from PEX5 (By similarity). Regulates autophagy and biogenesis of peroxisomes and Woronin bodies (PubMed:35323036). Plays important roles in mycelial growth and development and stress response (PubMed:35323036). Is also essential for conidiation and fatty acid utilization (PubMed:35323036). Required for nematode predation via trap formation (PubMed:35323036).</text>
</comment>
<comment type="catalytic activity">
    <reaction evidence="2">
        <text>ATP + H2O = ADP + phosphate + H(+)</text>
        <dbReference type="Rhea" id="RHEA:13065"/>
        <dbReference type="ChEBI" id="CHEBI:15377"/>
        <dbReference type="ChEBI" id="CHEBI:15378"/>
        <dbReference type="ChEBI" id="CHEBI:30616"/>
        <dbReference type="ChEBI" id="CHEBI:43474"/>
        <dbReference type="ChEBI" id="CHEBI:456216"/>
    </reaction>
    <physiologicalReaction direction="left-to-right" evidence="2">
        <dbReference type="Rhea" id="RHEA:13066"/>
    </physiologicalReaction>
</comment>
<comment type="subunit">
    <text evidence="2">Interacts with PEX1; forming the PEX1-PEX6 AAA ATPase complex, which is composed of a heterohexamer formed by a trimer of PEX1-PEX6 dimers.</text>
</comment>
<comment type="subcellular location">
    <subcellularLocation>
        <location evidence="2">Cytoplasm</location>
        <location evidence="2">Cytosol</location>
    </subcellularLocation>
    <subcellularLocation>
        <location evidence="2">Peroxisome membrane</location>
        <topology evidence="2">Peripheral membrane protein</topology>
        <orientation evidence="2">Cytoplasmic side</orientation>
    </subcellularLocation>
</comment>
<comment type="disruption phenotype">
    <text evidence="5">Leads to growth defects with sparse aerial hyphae, and reduced number of nuclei in hyphal cells (PubMed:35323036). Also results in complete elimination of sporulation and trap formation and a remarkable decrease in the ability to trap nematodes (PubMed:35323036). Leads to defective cell wall biosynthesis and increased stress susceptibility (PubMed:35323036). Results in the up-regulation of the proteasome, membranes, ribosomes, DNA replication, and cell cycle functions, and the down-regulation of MAPK signaling and nitrogen metabolism (PubMed:35323036).</text>
</comment>
<comment type="similarity">
    <text evidence="7">Belongs to the AAA ATPase family.</text>
</comment>
<gene>
    <name evidence="6" type="primary">PEX6</name>
    <name type="ORF">AOL_s00043g697</name>
</gene>
<evidence type="ECO:0000250" key="1">
    <source>
        <dbReference type="UniProtKB" id="P24004"/>
    </source>
</evidence>
<evidence type="ECO:0000250" key="2">
    <source>
        <dbReference type="UniProtKB" id="P33760"/>
    </source>
</evidence>
<evidence type="ECO:0000255" key="3"/>
<evidence type="ECO:0000256" key="4">
    <source>
        <dbReference type="SAM" id="MobiDB-lite"/>
    </source>
</evidence>
<evidence type="ECO:0000269" key="5">
    <source>
    </source>
</evidence>
<evidence type="ECO:0000303" key="6">
    <source>
    </source>
</evidence>
<evidence type="ECO:0000305" key="7"/>
<protein>
    <recommendedName>
        <fullName evidence="7">Peroxisomal ATPase PEX6</fullName>
        <ecNumber evidence="2">3.6.4.-</ecNumber>
    </recommendedName>
    <alternativeName>
        <fullName evidence="1">Peroxin-6</fullName>
    </alternativeName>
    <alternativeName>
        <fullName evidence="6">Peroxisomal biogenesis factor 6</fullName>
    </alternativeName>
</protein>
<keyword id="KW-0067">ATP-binding</keyword>
<keyword id="KW-0963">Cytoplasm</keyword>
<keyword id="KW-0378">Hydrolase</keyword>
<keyword id="KW-0472">Membrane</keyword>
<keyword id="KW-0547">Nucleotide-binding</keyword>
<keyword id="KW-0576">Peroxisome</keyword>
<keyword id="KW-0962">Peroxisome biogenesis</keyword>
<keyword id="KW-1185">Reference proteome</keyword>
<keyword id="KW-0843">Virulence</keyword>
<sequence length="1183" mass="126938">MPITHVALSPSPIPAPTSCASPWIVIPTTIPPLNSSQFPTIPLSTILLPASGAPHPLWEAFANQPSLRAENGIKFPIQLTATTPIALTSVVVGFFSTGEEGLFDEETIEEMITKGLDDMRVVHTGDIVRVQWMSVLARVRLCEPVDQGVITEDTKVIVVKESRGKKTGEPEDGPLANGIDLNGVDDSDSDEDVLSQGDDDDENNVDLPGVSTFMDIATTLGTPSISTPLRNGPGASISGLSDAPKVVKFTAKPLSQKIPTTLLLPTPPAADDAEARVYVRVNELMGLGCFSGDWIGVASDHGLFGDRLPNGSRAWRPAKVYSLPELYAGKEKVKVLMKGCVYMSPLLHANLGSPSSVVLTKSPFMNPSNIQQGALLSPVTTAPPSSATPQIPPTAKEVTLLRISTPISTDRALQPSLLAGLKTYFETSRKMVKVGDLIPVLIDESLGRNLFSPAALLPPDAENAEEIPGAGDELLYGSHGGAGIGVNNTGKLCAAWFRVGTIAPTDEATNAFSNGMTSQQWGGVAIVDPGSTRMVQAGSERGRIPPTLNSPWEYYLNIVPPPIPNNPPPIHPALELPNNYISPVHRRLRELISAATSLRSIKLGLAPLAVLLTSTQRSIGKRLLAYRAASDVGVHIFHIDAYDIIGEGGQASDVKTEAYLRARSERAASCGIENCVLLISHIEAFTAERMAEALRDIVADMRIVIATTTDVDKVPEPVRNVFTHELEVGAPDEGERTGLLRQITQERGVRLAKEIDLSTIALKTAALVAGDLVDVVERAMTACSERMEGLAAEMEGVTVRDIQLAGGDASCLNKQDFEAAVDAARKNFADSIGAPKIPNVSWDDVGGLANVKSAVMETIQLPLERPELFAKGMKKRSGILFYGPPGTGKTLLAKAIATEFSLNFFSVKGPELLNMYIGESEANVRRVFQRARDARPCVVFFDELDSVAPKRGNQGDSGGVMDRIVSQLLAELDGMSEGKEGSGGVFVIGATNRPDLLDPALLRPGRFDKMLFLGVSDTHHKQLTILEALTRKFTLHNSLSLAKISETLPFTYTGADLYALCSDAMLKAITRQASKVDQKIKEMENPVSTAYFFDYLATPDDVAVAVTEDDFMEAKKELIGSVSQKELEHYDRVRQMFETVDEKKGDATVDKKGKGRAIEIMVDGPGTGGEGAFGDDGDEEGLY</sequence>
<reference key="1">
    <citation type="journal article" date="2011" name="PLoS Pathog.">
        <title>Genomic and proteomic analyses of the fungus Arthrobotrys oligospora provide insights into nematode-trap formation.</title>
        <authorList>
            <person name="Yang J."/>
            <person name="Wang L."/>
            <person name="Ji X."/>
            <person name="Feng Y."/>
            <person name="Li X."/>
            <person name="Zou C."/>
            <person name="Xu J."/>
            <person name="Ren Y."/>
            <person name="Mi Q."/>
            <person name="Wu J."/>
            <person name="Liu S."/>
            <person name="Liu Y."/>
            <person name="Huang X."/>
            <person name="Wang H."/>
            <person name="Niu X."/>
            <person name="Li J."/>
            <person name="Liang L."/>
            <person name="Luo Y."/>
            <person name="Ji K."/>
            <person name="Zhou W."/>
            <person name="Yu Z."/>
            <person name="Li G."/>
            <person name="Liu Y."/>
            <person name="Li L."/>
            <person name="Qiao M."/>
            <person name="Feng L."/>
            <person name="Zhang K.-Q."/>
        </authorList>
    </citation>
    <scope>NUCLEOTIDE SEQUENCE [LARGE SCALE GENOMIC DNA]</scope>
    <source>
        <strain>ATCC 24927 / CBS 115.81 / DSM 1491</strain>
    </source>
</reference>
<reference key="2">
    <citation type="journal article" date="2022" name="Microbiol. Spectr.">
        <title>AoPEX1 and AoPEX6 are required for mycelial growth, conidiation, stress Response, fatty acid utilization, and trap formation in Arthrobotrys oligospora.</title>
        <authorList>
            <person name="Liu Q."/>
            <person name="Li D."/>
            <person name="Jiang K."/>
            <person name="Zhang K.Q."/>
            <person name="Yang J."/>
        </authorList>
    </citation>
    <scope>FUNCTION</scope>
    <scope>DISRUPTION PHENOTYPE</scope>
</reference>